<comment type="function">
    <text evidence="1">Involved in the biosynthesis of the chorismate, which leads to the biosynthesis of aromatic amino acids. Catalyzes the reversible NADPH linked reduction of 3-dehydroshikimate (DHSA) to yield shikimate (SA).</text>
</comment>
<comment type="catalytic activity">
    <reaction evidence="1">
        <text>shikimate + NADP(+) = 3-dehydroshikimate + NADPH + H(+)</text>
        <dbReference type="Rhea" id="RHEA:17737"/>
        <dbReference type="ChEBI" id="CHEBI:15378"/>
        <dbReference type="ChEBI" id="CHEBI:16630"/>
        <dbReference type="ChEBI" id="CHEBI:36208"/>
        <dbReference type="ChEBI" id="CHEBI:57783"/>
        <dbReference type="ChEBI" id="CHEBI:58349"/>
        <dbReference type="EC" id="1.1.1.25"/>
    </reaction>
</comment>
<comment type="pathway">
    <text evidence="1">Metabolic intermediate biosynthesis; chorismate biosynthesis; chorismate from D-erythrose 4-phosphate and phosphoenolpyruvate: step 4/7.</text>
</comment>
<comment type="subunit">
    <text evidence="1">Homodimer.</text>
</comment>
<comment type="similarity">
    <text evidence="1">Belongs to the shikimate dehydrogenase family.</text>
</comment>
<organism>
    <name type="scientific">Staphylococcus aureus (strain NCTC 8325 / PS 47)</name>
    <dbReference type="NCBI Taxonomy" id="93061"/>
    <lineage>
        <taxon>Bacteria</taxon>
        <taxon>Bacillati</taxon>
        <taxon>Bacillota</taxon>
        <taxon>Bacilli</taxon>
        <taxon>Bacillales</taxon>
        <taxon>Staphylococcaceae</taxon>
        <taxon>Staphylococcus</taxon>
    </lineage>
</organism>
<accession>Q2FXY1</accession>
<sequence>MKFAVIGNPISHSLSPVMHRANFNSLGLDDTYEALNIPIEDFHLIKEIISKKELEGFNITIPHKERIIPYLDYVDEQAINAGAVNTVLIKDGKWIGYNTDGIGYVKGLHSVYPDLENAYILILGAGGASKGIAYELAKFVKPKLTVANRTMARFESWNLNINQISLADAEKYLAEFDIVINTTPAGMAGNNESIINLKHLSPNTLMSDIVYIPYKTPILEEAERKGNHIYNGLDMFVYQGAESFKIWTNKDADINSMKTAVLQQLKGE</sequence>
<keyword id="KW-0028">Amino-acid biosynthesis</keyword>
<keyword id="KW-0057">Aromatic amino acid biosynthesis</keyword>
<keyword id="KW-0521">NADP</keyword>
<keyword id="KW-0560">Oxidoreductase</keyword>
<keyword id="KW-1185">Reference proteome</keyword>
<name>AROE_STAA8</name>
<protein>
    <recommendedName>
        <fullName evidence="1">Shikimate dehydrogenase (NADP(+))</fullName>
        <shortName evidence="1">SDH</shortName>
        <ecNumber evidence="1">1.1.1.25</ecNumber>
    </recommendedName>
</protein>
<proteinExistence type="inferred from homology"/>
<dbReference type="EC" id="1.1.1.25" evidence="1"/>
<dbReference type="EMBL" id="CP000253">
    <property type="protein sequence ID" value="ABD30773.1"/>
    <property type="molecule type" value="Genomic_DNA"/>
</dbReference>
<dbReference type="RefSeq" id="WP_000666761.1">
    <property type="nucleotide sequence ID" value="NZ_LS483365.1"/>
</dbReference>
<dbReference type="RefSeq" id="YP_500209.1">
    <property type="nucleotide sequence ID" value="NC_007795.1"/>
</dbReference>
<dbReference type="SMR" id="Q2FXY1"/>
<dbReference type="STRING" id="93061.SAOUHSC_01699"/>
<dbReference type="PaxDb" id="1280-SAXN108_1621"/>
<dbReference type="GeneID" id="3921811"/>
<dbReference type="KEGG" id="sao:SAOUHSC_01699"/>
<dbReference type="PATRIC" id="fig|93061.5.peg.1548"/>
<dbReference type="eggNOG" id="COG0169">
    <property type="taxonomic scope" value="Bacteria"/>
</dbReference>
<dbReference type="HOGENOM" id="CLU_044063_4_1_9"/>
<dbReference type="OrthoDB" id="9792692at2"/>
<dbReference type="UniPathway" id="UPA00053">
    <property type="reaction ID" value="UER00087"/>
</dbReference>
<dbReference type="PRO" id="PR:Q2FXY1"/>
<dbReference type="Proteomes" id="UP000008816">
    <property type="component" value="Chromosome"/>
</dbReference>
<dbReference type="GO" id="GO:0005829">
    <property type="term" value="C:cytosol"/>
    <property type="evidence" value="ECO:0000318"/>
    <property type="project" value="GO_Central"/>
</dbReference>
<dbReference type="GO" id="GO:0050661">
    <property type="term" value="F:NADP binding"/>
    <property type="evidence" value="ECO:0000318"/>
    <property type="project" value="GO_Central"/>
</dbReference>
<dbReference type="GO" id="GO:0004764">
    <property type="term" value="F:shikimate 3-dehydrogenase (NADP+) activity"/>
    <property type="evidence" value="ECO:0000318"/>
    <property type="project" value="GO_Central"/>
</dbReference>
<dbReference type="GO" id="GO:0008652">
    <property type="term" value="P:amino acid biosynthetic process"/>
    <property type="evidence" value="ECO:0007669"/>
    <property type="project" value="UniProtKB-KW"/>
</dbReference>
<dbReference type="GO" id="GO:0009073">
    <property type="term" value="P:aromatic amino acid family biosynthetic process"/>
    <property type="evidence" value="ECO:0007669"/>
    <property type="project" value="UniProtKB-KW"/>
</dbReference>
<dbReference type="GO" id="GO:0009423">
    <property type="term" value="P:chorismate biosynthetic process"/>
    <property type="evidence" value="ECO:0000318"/>
    <property type="project" value="GO_Central"/>
</dbReference>
<dbReference type="GO" id="GO:0019632">
    <property type="term" value="P:shikimate metabolic process"/>
    <property type="evidence" value="ECO:0000318"/>
    <property type="project" value="GO_Central"/>
</dbReference>
<dbReference type="CDD" id="cd01065">
    <property type="entry name" value="NAD_bind_Shikimate_DH"/>
    <property type="match status" value="1"/>
</dbReference>
<dbReference type="FunFam" id="3.40.50.10860:FF:000016">
    <property type="entry name" value="Shikimate dehydrogenase (NADP(+))"/>
    <property type="match status" value="1"/>
</dbReference>
<dbReference type="FunFam" id="3.40.50.720:FF:000445">
    <property type="entry name" value="Shikimate dehydrogenase (NADP(+))"/>
    <property type="match status" value="1"/>
</dbReference>
<dbReference type="Gene3D" id="3.40.50.10860">
    <property type="entry name" value="Leucine Dehydrogenase, chain A, domain 1"/>
    <property type="match status" value="1"/>
</dbReference>
<dbReference type="Gene3D" id="3.40.50.720">
    <property type="entry name" value="NAD(P)-binding Rossmann-like Domain"/>
    <property type="match status" value="1"/>
</dbReference>
<dbReference type="HAMAP" id="MF_00222">
    <property type="entry name" value="Shikimate_DH_AroE"/>
    <property type="match status" value="1"/>
</dbReference>
<dbReference type="InterPro" id="IPR046346">
    <property type="entry name" value="Aminoacid_DH-like_N_sf"/>
</dbReference>
<dbReference type="InterPro" id="IPR036291">
    <property type="entry name" value="NAD(P)-bd_dom_sf"/>
</dbReference>
<dbReference type="InterPro" id="IPR041121">
    <property type="entry name" value="SDH_C"/>
</dbReference>
<dbReference type="InterPro" id="IPR011342">
    <property type="entry name" value="Shikimate_DH"/>
</dbReference>
<dbReference type="InterPro" id="IPR013708">
    <property type="entry name" value="Shikimate_DH-bd_N"/>
</dbReference>
<dbReference type="InterPro" id="IPR022893">
    <property type="entry name" value="Shikimate_DH_fam"/>
</dbReference>
<dbReference type="InterPro" id="IPR006151">
    <property type="entry name" value="Shikm_DH/Glu-tRNA_Rdtase"/>
</dbReference>
<dbReference type="NCBIfam" id="TIGR00507">
    <property type="entry name" value="aroE"/>
    <property type="match status" value="1"/>
</dbReference>
<dbReference type="PANTHER" id="PTHR21089:SF1">
    <property type="entry name" value="BIFUNCTIONAL 3-DEHYDROQUINATE DEHYDRATASE_SHIKIMATE DEHYDROGENASE, CHLOROPLASTIC"/>
    <property type="match status" value="1"/>
</dbReference>
<dbReference type="PANTHER" id="PTHR21089">
    <property type="entry name" value="SHIKIMATE DEHYDROGENASE"/>
    <property type="match status" value="1"/>
</dbReference>
<dbReference type="Pfam" id="PF18317">
    <property type="entry name" value="SDH_C"/>
    <property type="match status" value="1"/>
</dbReference>
<dbReference type="Pfam" id="PF01488">
    <property type="entry name" value="Shikimate_DH"/>
    <property type="match status" value="1"/>
</dbReference>
<dbReference type="Pfam" id="PF08501">
    <property type="entry name" value="Shikimate_dh_N"/>
    <property type="match status" value="1"/>
</dbReference>
<dbReference type="SUPFAM" id="SSF53223">
    <property type="entry name" value="Aminoacid dehydrogenase-like, N-terminal domain"/>
    <property type="match status" value="1"/>
</dbReference>
<dbReference type="SUPFAM" id="SSF51735">
    <property type="entry name" value="NAD(P)-binding Rossmann-fold domains"/>
    <property type="match status" value="1"/>
</dbReference>
<reference key="1">
    <citation type="book" date="2006" name="Gram positive pathogens, 2nd edition">
        <title>The Staphylococcus aureus NCTC 8325 genome.</title>
        <editorList>
            <person name="Fischetti V."/>
            <person name="Novick R."/>
            <person name="Ferretti J."/>
            <person name="Portnoy D."/>
            <person name="Rood J."/>
        </editorList>
        <authorList>
            <person name="Gillaspy A.F."/>
            <person name="Worrell V."/>
            <person name="Orvis J."/>
            <person name="Roe B.A."/>
            <person name="Dyer D.W."/>
            <person name="Iandolo J.J."/>
        </authorList>
    </citation>
    <scope>NUCLEOTIDE SEQUENCE [LARGE SCALE GENOMIC DNA]</scope>
    <source>
        <strain>NCTC 8325 / PS 47</strain>
    </source>
</reference>
<feature type="chain" id="PRO_1000021340" description="Shikimate dehydrogenase (NADP(+))">
    <location>
        <begin position="1"/>
        <end position="268"/>
    </location>
</feature>
<feature type="active site" description="Proton acceptor" evidence="1">
    <location>
        <position position="64"/>
    </location>
</feature>
<feature type="binding site" evidence="1">
    <location>
        <begin position="13"/>
        <end position="15"/>
    </location>
    <ligand>
        <name>shikimate</name>
        <dbReference type="ChEBI" id="CHEBI:36208"/>
    </ligand>
</feature>
<feature type="binding site" evidence="1">
    <location>
        <position position="60"/>
    </location>
    <ligand>
        <name>shikimate</name>
        <dbReference type="ChEBI" id="CHEBI:36208"/>
    </ligand>
</feature>
<feature type="binding site" evidence="1">
    <location>
        <position position="76"/>
    </location>
    <ligand>
        <name>NADP(+)</name>
        <dbReference type="ChEBI" id="CHEBI:58349"/>
    </ligand>
</feature>
<feature type="binding site" evidence="1">
    <location>
        <position position="85"/>
    </location>
    <ligand>
        <name>shikimate</name>
        <dbReference type="ChEBI" id="CHEBI:36208"/>
    </ligand>
</feature>
<feature type="binding site" evidence="1">
    <location>
        <position position="100"/>
    </location>
    <ligand>
        <name>shikimate</name>
        <dbReference type="ChEBI" id="CHEBI:36208"/>
    </ligand>
</feature>
<feature type="binding site" evidence="1">
    <location>
        <begin position="124"/>
        <end position="128"/>
    </location>
    <ligand>
        <name>NADP(+)</name>
        <dbReference type="ChEBI" id="CHEBI:58349"/>
    </ligand>
</feature>
<feature type="binding site" evidence="1">
    <location>
        <begin position="148"/>
        <end position="153"/>
    </location>
    <ligand>
        <name>NADP(+)</name>
        <dbReference type="ChEBI" id="CHEBI:58349"/>
    </ligand>
</feature>
<feature type="binding site" evidence="1">
    <location>
        <position position="209"/>
    </location>
    <ligand>
        <name>NADP(+)</name>
        <dbReference type="ChEBI" id="CHEBI:58349"/>
    </ligand>
</feature>
<feature type="binding site" evidence="1">
    <location>
        <position position="211"/>
    </location>
    <ligand>
        <name>shikimate</name>
        <dbReference type="ChEBI" id="CHEBI:36208"/>
    </ligand>
</feature>
<feature type="binding site" evidence="1">
    <location>
        <position position="232"/>
    </location>
    <ligand>
        <name>NADP(+)</name>
        <dbReference type="ChEBI" id="CHEBI:58349"/>
    </ligand>
</feature>
<evidence type="ECO:0000255" key="1">
    <source>
        <dbReference type="HAMAP-Rule" id="MF_00222"/>
    </source>
</evidence>
<gene>
    <name evidence="1" type="primary">aroE</name>
    <name type="ordered locus">SAOUHSC_01699</name>
</gene>